<sequence length="293" mass="31635">MTDTTRSLRDCLAPAKLNLFLHITGRRPDGYHALQSVFQLLDWGDRLHFTLRDDGKVSRVTDVPGVPEESDLVVRAASLLKAHAGATLGVDIEIDKRLPMGAGLGGGSSDAATTLLALNRLWRLDLPRTTLQSLAVKLGADVPFFVFGKNAFAEGIGEALQAVELPARWFLVVTPRVHVPTAAIFSEKSLTRDSKPITITDFLAQRGIDAGWPDSFGRNDMQPVVTSKYAEVAKVVEWFYNLTPARMTGSGASVFAAFKSKADAEAAQAKLPAGWNSAVAESMSEHPLFAFAS</sequence>
<keyword id="KW-0067">ATP-binding</keyword>
<keyword id="KW-0414">Isoprene biosynthesis</keyword>
<keyword id="KW-0418">Kinase</keyword>
<keyword id="KW-0547">Nucleotide-binding</keyword>
<keyword id="KW-0808">Transferase</keyword>
<protein>
    <recommendedName>
        <fullName evidence="1">4-diphosphocytidyl-2-C-methyl-D-erythritol kinase</fullName>
        <shortName evidence="1">CMK</shortName>
        <ecNumber evidence="1">2.7.1.148</ecNumber>
    </recommendedName>
    <alternativeName>
        <fullName evidence="1">4-(cytidine-5'-diphospho)-2-C-methyl-D-erythritol kinase</fullName>
    </alternativeName>
</protein>
<gene>
    <name evidence="1" type="primary">ispE</name>
    <name type="ordered locus">BMA10229_A1504</name>
</gene>
<evidence type="ECO:0000255" key="1">
    <source>
        <dbReference type="HAMAP-Rule" id="MF_00061"/>
    </source>
</evidence>
<dbReference type="EC" id="2.7.1.148" evidence="1"/>
<dbReference type="EMBL" id="CP000546">
    <property type="protein sequence ID" value="ABN00742.1"/>
    <property type="molecule type" value="Genomic_DNA"/>
</dbReference>
<dbReference type="RefSeq" id="WP_004195241.1">
    <property type="nucleotide sequence ID" value="NC_008836.1"/>
</dbReference>
<dbReference type="SMR" id="A2S6B7"/>
<dbReference type="GeneID" id="93059044"/>
<dbReference type="KEGG" id="bml:BMA10229_A1504"/>
<dbReference type="HOGENOM" id="CLU_053057_3_0_4"/>
<dbReference type="UniPathway" id="UPA00056">
    <property type="reaction ID" value="UER00094"/>
</dbReference>
<dbReference type="Proteomes" id="UP000002283">
    <property type="component" value="Chromosome I"/>
</dbReference>
<dbReference type="GO" id="GO:0050515">
    <property type="term" value="F:4-(cytidine 5'-diphospho)-2-C-methyl-D-erythritol kinase activity"/>
    <property type="evidence" value="ECO:0007669"/>
    <property type="project" value="UniProtKB-UniRule"/>
</dbReference>
<dbReference type="GO" id="GO:0005524">
    <property type="term" value="F:ATP binding"/>
    <property type="evidence" value="ECO:0007669"/>
    <property type="project" value="UniProtKB-UniRule"/>
</dbReference>
<dbReference type="GO" id="GO:0019288">
    <property type="term" value="P:isopentenyl diphosphate biosynthetic process, methylerythritol 4-phosphate pathway"/>
    <property type="evidence" value="ECO:0007669"/>
    <property type="project" value="UniProtKB-UniRule"/>
</dbReference>
<dbReference type="GO" id="GO:0016114">
    <property type="term" value="P:terpenoid biosynthetic process"/>
    <property type="evidence" value="ECO:0007669"/>
    <property type="project" value="InterPro"/>
</dbReference>
<dbReference type="Gene3D" id="3.30.230.10">
    <property type="match status" value="1"/>
</dbReference>
<dbReference type="Gene3D" id="3.30.70.890">
    <property type="entry name" value="GHMP kinase, C-terminal domain"/>
    <property type="match status" value="1"/>
</dbReference>
<dbReference type="HAMAP" id="MF_00061">
    <property type="entry name" value="IspE"/>
    <property type="match status" value="1"/>
</dbReference>
<dbReference type="InterPro" id="IPR013750">
    <property type="entry name" value="GHMP_kinase_C_dom"/>
</dbReference>
<dbReference type="InterPro" id="IPR036554">
    <property type="entry name" value="GHMP_kinase_C_sf"/>
</dbReference>
<dbReference type="InterPro" id="IPR006204">
    <property type="entry name" value="GHMP_kinase_N_dom"/>
</dbReference>
<dbReference type="InterPro" id="IPR004424">
    <property type="entry name" value="IspE"/>
</dbReference>
<dbReference type="InterPro" id="IPR020568">
    <property type="entry name" value="Ribosomal_Su5_D2-typ_SF"/>
</dbReference>
<dbReference type="InterPro" id="IPR014721">
    <property type="entry name" value="Ribsml_uS5_D2-typ_fold_subgr"/>
</dbReference>
<dbReference type="NCBIfam" id="TIGR00154">
    <property type="entry name" value="ispE"/>
    <property type="match status" value="1"/>
</dbReference>
<dbReference type="NCBIfam" id="NF011202">
    <property type="entry name" value="PRK14608.1"/>
    <property type="match status" value="1"/>
</dbReference>
<dbReference type="PANTHER" id="PTHR43527">
    <property type="entry name" value="4-DIPHOSPHOCYTIDYL-2-C-METHYL-D-ERYTHRITOL KINASE, CHLOROPLASTIC"/>
    <property type="match status" value="1"/>
</dbReference>
<dbReference type="PANTHER" id="PTHR43527:SF2">
    <property type="entry name" value="4-DIPHOSPHOCYTIDYL-2-C-METHYL-D-ERYTHRITOL KINASE, CHLOROPLASTIC"/>
    <property type="match status" value="1"/>
</dbReference>
<dbReference type="Pfam" id="PF08544">
    <property type="entry name" value="GHMP_kinases_C"/>
    <property type="match status" value="1"/>
</dbReference>
<dbReference type="Pfam" id="PF00288">
    <property type="entry name" value="GHMP_kinases_N"/>
    <property type="match status" value="1"/>
</dbReference>
<dbReference type="PIRSF" id="PIRSF010376">
    <property type="entry name" value="IspE"/>
    <property type="match status" value="1"/>
</dbReference>
<dbReference type="SUPFAM" id="SSF55060">
    <property type="entry name" value="GHMP Kinase, C-terminal domain"/>
    <property type="match status" value="1"/>
</dbReference>
<dbReference type="SUPFAM" id="SSF54211">
    <property type="entry name" value="Ribosomal protein S5 domain 2-like"/>
    <property type="match status" value="1"/>
</dbReference>
<accession>A2S6B7</accession>
<feature type="chain" id="PRO_1000007821" description="4-diphosphocytidyl-2-C-methyl-D-erythritol kinase">
    <location>
        <begin position="1"/>
        <end position="293"/>
    </location>
</feature>
<feature type="active site" evidence="1">
    <location>
        <position position="16"/>
    </location>
</feature>
<feature type="active site" evidence="1">
    <location>
        <position position="141"/>
    </location>
</feature>
<feature type="binding site" evidence="1">
    <location>
        <begin position="99"/>
        <end position="109"/>
    </location>
    <ligand>
        <name>ATP</name>
        <dbReference type="ChEBI" id="CHEBI:30616"/>
    </ligand>
</feature>
<proteinExistence type="inferred from homology"/>
<comment type="function">
    <text evidence="1">Catalyzes the phosphorylation of the position 2 hydroxy group of 4-diphosphocytidyl-2C-methyl-D-erythritol.</text>
</comment>
<comment type="catalytic activity">
    <reaction evidence="1">
        <text>4-CDP-2-C-methyl-D-erythritol + ATP = 4-CDP-2-C-methyl-D-erythritol 2-phosphate + ADP + H(+)</text>
        <dbReference type="Rhea" id="RHEA:18437"/>
        <dbReference type="ChEBI" id="CHEBI:15378"/>
        <dbReference type="ChEBI" id="CHEBI:30616"/>
        <dbReference type="ChEBI" id="CHEBI:57823"/>
        <dbReference type="ChEBI" id="CHEBI:57919"/>
        <dbReference type="ChEBI" id="CHEBI:456216"/>
        <dbReference type="EC" id="2.7.1.148"/>
    </reaction>
</comment>
<comment type="pathway">
    <text evidence="1">Isoprenoid biosynthesis; isopentenyl diphosphate biosynthesis via DXP pathway; isopentenyl diphosphate from 1-deoxy-D-xylulose 5-phosphate: step 3/6.</text>
</comment>
<comment type="similarity">
    <text evidence="1">Belongs to the GHMP kinase family. IspE subfamily.</text>
</comment>
<organism>
    <name type="scientific">Burkholderia mallei (strain NCTC 10229)</name>
    <dbReference type="NCBI Taxonomy" id="412022"/>
    <lineage>
        <taxon>Bacteria</taxon>
        <taxon>Pseudomonadati</taxon>
        <taxon>Pseudomonadota</taxon>
        <taxon>Betaproteobacteria</taxon>
        <taxon>Burkholderiales</taxon>
        <taxon>Burkholderiaceae</taxon>
        <taxon>Burkholderia</taxon>
        <taxon>pseudomallei group</taxon>
    </lineage>
</organism>
<reference key="1">
    <citation type="journal article" date="2010" name="Genome Biol. Evol.">
        <title>Continuing evolution of Burkholderia mallei through genome reduction and large-scale rearrangements.</title>
        <authorList>
            <person name="Losada L."/>
            <person name="Ronning C.M."/>
            <person name="DeShazer D."/>
            <person name="Woods D."/>
            <person name="Fedorova N."/>
            <person name="Kim H.S."/>
            <person name="Shabalina S.A."/>
            <person name="Pearson T.R."/>
            <person name="Brinkac L."/>
            <person name="Tan P."/>
            <person name="Nandi T."/>
            <person name="Crabtree J."/>
            <person name="Badger J."/>
            <person name="Beckstrom-Sternberg S."/>
            <person name="Saqib M."/>
            <person name="Schutzer S.E."/>
            <person name="Keim P."/>
            <person name="Nierman W.C."/>
        </authorList>
    </citation>
    <scope>NUCLEOTIDE SEQUENCE [LARGE SCALE GENOMIC DNA]</scope>
    <source>
        <strain>NCTC 10229</strain>
    </source>
</reference>
<name>ISPE_BURM9</name>